<feature type="chain" id="PRO_0000190650" description="4-hydroxy-3-methylbut-2-en-1-yl diphosphate synthase (flavodoxin)">
    <location>
        <begin position="1"/>
        <end position="380"/>
    </location>
</feature>
<feature type="binding site" evidence="1">
    <location>
        <position position="279"/>
    </location>
    <ligand>
        <name>[4Fe-4S] cluster</name>
        <dbReference type="ChEBI" id="CHEBI:49883"/>
    </ligand>
</feature>
<feature type="binding site" evidence="1">
    <location>
        <position position="282"/>
    </location>
    <ligand>
        <name>[4Fe-4S] cluster</name>
        <dbReference type="ChEBI" id="CHEBI:49883"/>
    </ligand>
</feature>
<feature type="binding site" evidence="1">
    <location>
        <position position="314"/>
    </location>
    <ligand>
        <name>[4Fe-4S] cluster</name>
        <dbReference type="ChEBI" id="CHEBI:49883"/>
    </ligand>
</feature>
<feature type="binding site" evidence="1">
    <location>
        <position position="321"/>
    </location>
    <ligand>
        <name>[4Fe-4S] cluster</name>
        <dbReference type="ChEBI" id="CHEBI:49883"/>
    </ligand>
</feature>
<protein>
    <recommendedName>
        <fullName evidence="1">4-hydroxy-3-methylbut-2-en-1-yl diphosphate synthase (flavodoxin)</fullName>
        <ecNumber evidence="1">1.17.7.3</ecNumber>
    </recommendedName>
    <alternativeName>
        <fullName evidence="1">1-hydroxy-2-methyl-2-(E)-butenyl 4-diphosphate synthase</fullName>
    </alternativeName>
</protein>
<reference key="1">
    <citation type="journal article" date="2003" name="Genome Res.">
        <title>Tropheryma whipplei twist: a human pathogenic Actinobacteria with a reduced genome.</title>
        <authorList>
            <person name="Raoult D."/>
            <person name="Ogata H."/>
            <person name="Audic S."/>
            <person name="Robert C."/>
            <person name="Suhre K."/>
            <person name="Drancourt M."/>
            <person name="Claverie J.-M."/>
        </authorList>
    </citation>
    <scope>NUCLEOTIDE SEQUENCE [LARGE SCALE GENOMIC DNA]</scope>
    <source>
        <strain>Twist</strain>
    </source>
</reference>
<dbReference type="EC" id="1.17.7.3" evidence="1"/>
<dbReference type="EMBL" id="AE014184">
    <property type="protein sequence ID" value="AAO44283.1"/>
    <property type="molecule type" value="Genomic_DNA"/>
</dbReference>
<dbReference type="SMR" id="Q83N18"/>
<dbReference type="STRING" id="203267.TWT_186"/>
<dbReference type="KEGG" id="twh:TWT_186"/>
<dbReference type="eggNOG" id="COG0821">
    <property type="taxonomic scope" value="Bacteria"/>
</dbReference>
<dbReference type="HOGENOM" id="CLU_042258_0_0_11"/>
<dbReference type="UniPathway" id="UPA00056">
    <property type="reaction ID" value="UER00096"/>
</dbReference>
<dbReference type="Proteomes" id="UP000002200">
    <property type="component" value="Chromosome"/>
</dbReference>
<dbReference type="GO" id="GO:0051539">
    <property type="term" value="F:4 iron, 4 sulfur cluster binding"/>
    <property type="evidence" value="ECO:0007669"/>
    <property type="project" value="UniProtKB-UniRule"/>
</dbReference>
<dbReference type="GO" id="GO:0046429">
    <property type="term" value="F:4-hydroxy-3-methylbut-2-en-1-yl diphosphate synthase activity (ferredoxin)"/>
    <property type="evidence" value="ECO:0007669"/>
    <property type="project" value="UniProtKB-UniRule"/>
</dbReference>
<dbReference type="GO" id="GO:0141197">
    <property type="term" value="F:4-hydroxy-3-methylbut-2-enyl-diphosphate synthase activity (flavodoxin)"/>
    <property type="evidence" value="ECO:0007669"/>
    <property type="project" value="UniProtKB-EC"/>
</dbReference>
<dbReference type="GO" id="GO:0005506">
    <property type="term" value="F:iron ion binding"/>
    <property type="evidence" value="ECO:0007669"/>
    <property type="project" value="InterPro"/>
</dbReference>
<dbReference type="GO" id="GO:0019288">
    <property type="term" value="P:isopentenyl diphosphate biosynthetic process, methylerythritol 4-phosphate pathway"/>
    <property type="evidence" value="ECO:0007669"/>
    <property type="project" value="UniProtKB-UniRule"/>
</dbReference>
<dbReference type="GO" id="GO:0016114">
    <property type="term" value="P:terpenoid biosynthetic process"/>
    <property type="evidence" value="ECO:0007669"/>
    <property type="project" value="InterPro"/>
</dbReference>
<dbReference type="FunFam" id="3.20.20.20:FF:000001">
    <property type="entry name" value="4-hydroxy-3-methylbut-2-en-1-yl diphosphate synthase (flavodoxin)"/>
    <property type="match status" value="1"/>
</dbReference>
<dbReference type="Gene3D" id="3.20.20.20">
    <property type="entry name" value="Dihydropteroate synthase-like"/>
    <property type="match status" value="1"/>
</dbReference>
<dbReference type="Gene3D" id="3.30.413.10">
    <property type="entry name" value="Sulfite Reductase Hemoprotein, domain 1"/>
    <property type="match status" value="1"/>
</dbReference>
<dbReference type="HAMAP" id="MF_00159">
    <property type="entry name" value="IspG"/>
    <property type="match status" value="1"/>
</dbReference>
<dbReference type="InterPro" id="IPR011005">
    <property type="entry name" value="Dihydropteroate_synth-like_sf"/>
</dbReference>
<dbReference type="InterPro" id="IPR016425">
    <property type="entry name" value="IspG_bac"/>
</dbReference>
<dbReference type="InterPro" id="IPR004588">
    <property type="entry name" value="IspG_bac-typ"/>
</dbReference>
<dbReference type="InterPro" id="IPR045854">
    <property type="entry name" value="NO2/SO3_Rdtase_4Fe4S_sf"/>
</dbReference>
<dbReference type="NCBIfam" id="TIGR00612">
    <property type="entry name" value="ispG_gcpE"/>
    <property type="match status" value="1"/>
</dbReference>
<dbReference type="NCBIfam" id="NF001540">
    <property type="entry name" value="PRK00366.1"/>
    <property type="match status" value="1"/>
</dbReference>
<dbReference type="PANTHER" id="PTHR30454">
    <property type="entry name" value="4-HYDROXY-3-METHYLBUT-2-EN-1-YL DIPHOSPHATE SYNTHASE"/>
    <property type="match status" value="1"/>
</dbReference>
<dbReference type="PANTHER" id="PTHR30454:SF0">
    <property type="entry name" value="4-HYDROXY-3-METHYLBUT-2-EN-1-YL DIPHOSPHATE SYNTHASE (FERREDOXIN), CHLOROPLASTIC"/>
    <property type="match status" value="1"/>
</dbReference>
<dbReference type="Pfam" id="PF04551">
    <property type="entry name" value="GcpE"/>
    <property type="match status" value="1"/>
</dbReference>
<dbReference type="PIRSF" id="PIRSF004640">
    <property type="entry name" value="IspG"/>
    <property type="match status" value="1"/>
</dbReference>
<dbReference type="SUPFAM" id="SSF51717">
    <property type="entry name" value="Dihydropteroate synthetase-like"/>
    <property type="match status" value="1"/>
</dbReference>
<dbReference type="SUPFAM" id="SSF56014">
    <property type="entry name" value="Nitrite and sulphite reductase 4Fe-4S domain-like"/>
    <property type="match status" value="1"/>
</dbReference>
<proteinExistence type="inferred from homology"/>
<evidence type="ECO:0000255" key="1">
    <source>
        <dbReference type="HAMAP-Rule" id="MF_00159"/>
    </source>
</evidence>
<comment type="function">
    <text evidence="1">Converts 2C-methyl-D-erythritol 2,4-cyclodiphosphate (ME-2,4cPP) into 1-hydroxy-2-methyl-2-(E)-butenyl 4-diphosphate.</text>
</comment>
<comment type="catalytic activity">
    <reaction evidence="1">
        <text>(2E)-4-hydroxy-3-methylbut-2-enyl diphosphate + oxidized [flavodoxin] + H2O + 2 H(+) = 2-C-methyl-D-erythritol 2,4-cyclic diphosphate + reduced [flavodoxin]</text>
        <dbReference type="Rhea" id="RHEA:43604"/>
        <dbReference type="Rhea" id="RHEA-COMP:10622"/>
        <dbReference type="Rhea" id="RHEA-COMP:10623"/>
        <dbReference type="ChEBI" id="CHEBI:15377"/>
        <dbReference type="ChEBI" id="CHEBI:15378"/>
        <dbReference type="ChEBI" id="CHEBI:57618"/>
        <dbReference type="ChEBI" id="CHEBI:58210"/>
        <dbReference type="ChEBI" id="CHEBI:58483"/>
        <dbReference type="ChEBI" id="CHEBI:128753"/>
        <dbReference type="EC" id="1.17.7.3"/>
    </reaction>
</comment>
<comment type="cofactor">
    <cofactor evidence="1">
        <name>[4Fe-4S] cluster</name>
        <dbReference type="ChEBI" id="CHEBI:49883"/>
    </cofactor>
    <text evidence="1">Binds 1 [4Fe-4S] cluster.</text>
</comment>
<comment type="pathway">
    <text evidence="1">Isoprenoid biosynthesis; isopentenyl diphosphate biosynthesis via DXP pathway; isopentenyl diphosphate from 1-deoxy-D-xylulose 5-phosphate: step 5/6.</text>
</comment>
<comment type="similarity">
    <text evidence="1">Belongs to the IspG family.</text>
</comment>
<gene>
    <name evidence="1" type="primary">ispG</name>
    <name type="ordered locus">TWT_186</name>
</gene>
<keyword id="KW-0004">4Fe-4S</keyword>
<keyword id="KW-0408">Iron</keyword>
<keyword id="KW-0411">Iron-sulfur</keyword>
<keyword id="KW-0414">Isoprene biosynthesis</keyword>
<keyword id="KW-0479">Metal-binding</keyword>
<keyword id="KW-0560">Oxidoreductase</keyword>
<keyword id="KW-1185">Reference proteome</keyword>
<accession>Q83N18</accession>
<name>ISPG_TROWT</name>
<sequence length="380" mass="40809">MSIDLGLPKVREVLSPRRKTRRIKLGKVFVGGDSPILVQSMTTTQTTNIDATLQQIAELTAAGCDIVRVAVPSRDDAQVLHIIAKKSQIPVIADIHFQPNYVYAAIDAGCAAVRVNPGNIRKFDDQIGKIAEKAKAAGVSIRIGVNAGSLDPRLLEKYGRPTAQALVDSAVWEAGLFEEYDFHDFKISVKHHDPVTMVKAYRLLAERGDWPLHLGVTEAGPAFQGTIKSSTAFAVLLAEGIGDTIRVSLSAPPVEEVKVGLEILRSLGLRERRLEIVSCPSCGRAQVDVYRLAEEVTKGLEKLTVPLRVAVMGCIVNGPGEAREADLGVASGNGKGQIFVRGQVIKTVPESEIVPTLLEEANRLAGEMPFSSGSPTIAIV</sequence>
<organism>
    <name type="scientific">Tropheryma whipplei (strain Twist)</name>
    <name type="common">Whipple's bacillus</name>
    <dbReference type="NCBI Taxonomy" id="203267"/>
    <lineage>
        <taxon>Bacteria</taxon>
        <taxon>Bacillati</taxon>
        <taxon>Actinomycetota</taxon>
        <taxon>Actinomycetes</taxon>
        <taxon>Micrococcales</taxon>
        <taxon>Tropherymataceae</taxon>
        <taxon>Tropheryma</taxon>
    </lineage>
</organism>